<reference key="1">
    <citation type="journal article" date="2000" name="Nature">
        <title>Sequence and analysis of chromosome 3 of the plant Arabidopsis thaliana.</title>
        <authorList>
            <person name="Salanoubat M."/>
            <person name="Lemcke K."/>
            <person name="Rieger M."/>
            <person name="Ansorge W."/>
            <person name="Unseld M."/>
            <person name="Fartmann B."/>
            <person name="Valle G."/>
            <person name="Bloecker H."/>
            <person name="Perez-Alonso M."/>
            <person name="Obermaier B."/>
            <person name="Delseny M."/>
            <person name="Boutry M."/>
            <person name="Grivell L.A."/>
            <person name="Mache R."/>
            <person name="Puigdomenech P."/>
            <person name="De Simone V."/>
            <person name="Choisne N."/>
            <person name="Artiguenave F."/>
            <person name="Robert C."/>
            <person name="Brottier P."/>
            <person name="Wincker P."/>
            <person name="Cattolico L."/>
            <person name="Weissenbach J."/>
            <person name="Saurin W."/>
            <person name="Quetier F."/>
            <person name="Schaefer M."/>
            <person name="Mueller-Auer S."/>
            <person name="Gabel C."/>
            <person name="Fuchs M."/>
            <person name="Benes V."/>
            <person name="Wurmbach E."/>
            <person name="Drzonek H."/>
            <person name="Erfle H."/>
            <person name="Jordan N."/>
            <person name="Bangert S."/>
            <person name="Wiedelmann R."/>
            <person name="Kranz H."/>
            <person name="Voss H."/>
            <person name="Holland R."/>
            <person name="Brandt P."/>
            <person name="Nyakatura G."/>
            <person name="Vezzi A."/>
            <person name="D'Angelo M."/>
            <person name="Pallavicini A."/>
            <person name="Toppo S."/>
            <person name="Simionati B."/>
            <person name="Conrad A."/>
            <person name="Hornischer K."/>
            <person name="Kauer G."/>
            <person name="Loehnert T.-H."/>
            <person name="Nordsiek G."/>
            <person name="Reichelt J."/>
            <person name="Scharfe M."/>
            <person name="Schoen O."/>
            <person name="Bargues M."/>
            <person name="Terol J."/>
            <person name="Climent J."/>
            <person name="Navarro P."/>
            <person name="Collado C."/>
            <person name="Perez-Perez A."/>
            <person name="Ottenwaelder B."/>
            <person name="Duchemin D."/>
            <person name="Cooke R."/>
            <person name="Laudie M."/>
            <person name="Berger-Llauro C."/>
            <person name="Purnelle B."/>
            <person name="Masuy D."/>
            <person name="de Haan M."/>
            <person name="Maarse A.C."/>
            <person name="Alcaraz J.-P."/>
            <person name="Cottet A."/>
            <person name="Casacuberta E."/>
            <person name="Monfort A."/>
            <person name="Argiriou A."/>
            <person name="Flores M."/>
            <person name="Liguori R."/>
            <person name="Vitale D."/>
            <person name="Mannhaupt G."/>
            <person name="Haase D."/>
            <person name="Schoof H."/>
            <person name="Rudd S."/>
            <person name="Zaccaria P."/>
            <person name="Mewes H.-W."/>
            <person name="Mayer K.F.X."/>
            <person name="Kaul S."/>
            <person name="Town C.D."/>
            <person name="Koo H.L."/>
            <person name="Tallon L.J."/>
            <person name="Jenkins J."/>
            <person name="Rooney T."/>
            <person name="Rizzo M."/>
            <person name="Walts A."/>
            <person name="Utterback T."/>
            <person name="Fujii C.Y."/>
            <person name="Shea T.P."/>
            <person name="Creasy T.H."/>
            <person name="Haas B."/>
            <person name="Maiti R."/>
            <person name="Wu D."/>
            <person name="Peterson J."/>
            <person name="Van Aken S."/>
            <person name="Pai G."/>
            <person name="Militscher J."/>
            <person name="Sellers P."/>
            <person name="Gill J.E."/>
            <person name="Feldblyum T.V."/>
            <person name="Preuss D."/>
            <person name="Lin X."/>
            <person name="Nierman W.C."/>
            <person name="Salzberg S.L."/>
            <person name="White O."/>
            <person name="Venter J.C."/>
            <person name="Fraser C.M."/>
            <person name="Kaneko T."/>
            <person name="Nakamura Y."/>
            <person name="Sato S."/>
            <person name="Kato T."/>
            <person name="Asamizu E."/>
            <person name="Sasamoto S."/>
            <person name="Kimura T."/>
            <person name="Idesawa K."/>
            <person name="Kawashima K."/>
            <person name="Kishida Y."/>
            <person name="Kiyokawa C."/>
            <person name="Kohara M."/>
            <person name="Matsumoto M."/>
            <person name="Matsuno A."/>
            <person name="Muraki A."/>
            <person name="Nakayama S."/>
            <person name="Nakazaki N."/>
            <person name="Shinpo S."/>
            <person name="Takeuchi C."/>
            <person name="Wada T."/>
            <person name="Watanabe A."/>
            <person name="Yamada M."/>
            <person name="Yasuda M."/>
            <person name="Tabata S."/>
        </authorList>
    </citation>
    <scope>NUCLEOTIDE SEQUENCE [LARGE SCALE GENOMIC DNA]</scope>
    <source>
        <strain>cv. Columbia</strain>
    </source>
</reference>
<reference key="2">
    <citation type="journal article" date="2017" name="Plant J.">
        <title>Araport11: a complete reannotation of the Arabidopsis thaliana reference genome.</title>
        <authorList>
            <person name="Cheng C.Y."/>
            <person name="Krishnakumar V."/>
            <person name="Chan A.P."/>
            <person name="Thibaud-Nissen F."/>
            <person name="Schobel S."/>
            <person name="Town C.D."/>
        </authorList>
    </citation>
    <scope>GENOME REANNOTATION</scope>
    <source>
        <strain>cv. Columbia</strain>
    </source>
</reference>
<reference key="3">
    <citation type="journal article" date="2003" name="Science">
        <title>Empirical analysis of transcriptional activity in the Arabidopsis genome.</title>
        <authorList>
            <person name="Yamada K."/>
            <person name="Lim J."/>
            <person name="Dale J.M."/>
            <person name="Chen H."/>
            <person name="Shinn P."/>
            <person name="Palm C.J."/>
            <person name="Southwick A.M."/>
            <person name="Wu H.C."/>
            <person name="Kim C.J."/>
            <person name="Nguyen M."/>
            <person name="Pham P.K."/>
            <person name="Cheuk R.F."/>
            <person name="Karlin-Newmann G."/>
            <person name="Liu S.X."/>
            <person name="Lam B."/>
            <person name="Sakano H."/>
            <person name="Wu T."/>
            <person name="Yu G."/>
            <person name="Miranda M."/>
            <person name="Quach H.L."/>
            <person name="Tripp M."/>
            <person name="Chang C.H."/>
            <person name="Lee J.M."/>
            <person name="Toriumi M.J."/>
            <person name="Chan M.M."/>
            <person name="Tang C.C."/>
            <person name="Onodera C.S."/>
            <person name="Deng J.M."/>
            <person name="Akiyama K."/>
            <person name="Ansari Y."/>
            <person name="Arakawa T."/>
            <person name="Banh J."/>
            <person name="Banno F."/>
            <person name="Bowser L."/>
            <person name="Brooks S.Y."/>
            <person name="Carninci P."/>
            <person name="Chao Q."/>
            <person name="Choy N."/>
            <person name="Enju A."/>
            <person name="Goldsmith A.D."/>
            <person name="Gurjal M."/>
            <person name="Hansen N.F."/>
            <person name="Hayashizaki Y."/>
            <person name="Johnson-Hopson C."/>
            <person name="Hsuan V.W."/>
            <person name="Iida K."/>
            <person name="Karnes M."/>
            <person name="Khan S."/>
            <person name="Koesema E."/>
            <person name="Ishida J."/>
            <person name="Jiang P.X."/>
            <person name="Jones T."/>
            <person name="Kawai J."/>
            <person name="Kamiya A."/>
            <person name="Meyers C."/>
            <person name="Nakajima M."/>
            <person name="Narusaka M."/>
            <person name="Seki M."/>
            <person name="Sakurai T."/>
            <person name="Satou M."/>
            <person name="Tamse R."/>
            <person name="Vaysberg M."/>
            <person name="Wallender E.K."/>
            <person name="Wong C."/>
            <person name="Yamamura Y."/>
            <person name="Yuan S."/>
            <person name="Shinozaki K."/>
            <person name="Davis R.W."/>
            <person name="Theologis A."/>
            <person name="Ecker J.R."/>
        </authorList>
    </citation>
    <scope>NUCLEOTIDE SEQUENCE [LARGE SCALE MRNA]</scope>
    <source>
        <strain>cv. Columbia</strain>
    </source>
</reference>
<accession>Q9LY56</accession>
<organism>
    <name type="scientific">Arabidopsis thaliana</name>
    <name type="common">Mouse-ear cress</name>
    <dbReference type="NCBI Taxonomy" id="3702"/>
    <lineage>
        <taxon>Eukaryota</taxon>
        <taxon>Viridiplantae</taxon>
        <taxon>Streptophyta</taxon>
        <taxon>Embryophyta</taxon>
        <taxon>Tracheophyta</taxon>
        <taxon>Spermatophyta</taxon>
        <taxon>Magnoliopsida</taxon>
        <taxon>eudicotyledons</taxon>
        <taxon>Gunneridae</taxon>
        <taxon>Pentapetalae</taxon>
        <taxon>rosids</taxon>
        <taxon>malvids</taxon>
        <taxon>Brassicales</taxon>
        <taxon>Brassicaceae</taxon>
        <taxon>Camelineae</taxon>
        <taxon>Arabidopsis</taxon>
    </lineage>
</organism>
<name>YIPL4_ARATH</name>
<sequence length="121" mass="13592">MGRVFMVDLEGNIYICKLCKTHLSTDQDIMSKSFQCKNGRAYLFNNVVNVSVGEKEDRMMITGLHNVVDIFCVGCGSNVGWKYEFAHEKSQKYKEGKSVLELYKISGPHDSNDLVSDGDDA</sequence>
<feature type="chain" id="PRO_0000212404" description="Protein yippee-like At3g55890">
    <location>
        <begin position="1"/>
        <end position="121"/>
    </location>
</feature>
<feature type="domain" description="Yippee" evidence="1">
    <location>
        <begin position="12"/>
        <end position="109"/>
    </location>
</feature>
<feature type="binding site" evidence="1">
    <location>
        <position position="16"/>
    </location>
    <ligand>
        <name>Zn(2+)</name>
        <dbReference type="ChEBI" id="CHEBI:29105"/>
    </ligand>
</feature>
<feature type="binding site" evidence="1">
    <location>
        <position position="19"/>
    </location>
    <ligand>
        <name>Zn(2+)</name>
        <dbReference type="ChEBI" id="CHEBI:29105"/>
    </ligand>
</feature>
<feature type="binding site" evidence="1">
    <location>
        <position position="72"/>
    </location>
    <ligand>
        <name>Zn(2+)</name>
        <dbReference type="ChEBI" id="CHEBI:29105"/>
    </ligand>
</feature>
<feature type="binding site" evidence="1">
    <location>
        <position position="75"/>
    </location>
    <ligand>
        <name>Zn(2+)</name>
        <dbReference type="ChEBI" id="CHEBI:29105"/>
    </ligand>
</feature>
<proteinExistence type="evidence at transcript level"/>
<protein>
    <recommendedName>
        <fullName>Protein yippee-like At3g55890</fullName>
    </recommendedName>
</protein>
<dbReference type="EMBL" id="AL163832">
    <property type="protein sequence ID" value="CAB87843.1"/>
    <property type="molecule type" value="Genomic_DNA"/>
</dbReference>
<dbReference type="EMBL" id="CP002686">
    <property type="protein sequence ID" value="AEE79454.1"/>
    <property type="molecule type" value="Genomic_DNA"/>
</dbReference>
<dbReference type="EMBL" id="CP002686">
    <property type="protein sequence ID" value="ANM63340.1"/>
    <property type="molecule type" value="Genomic_DNA"/>
</dbReference>
<dbReference type="EMBL" id="AY050951">
    <property type="protein sequence ID" value="AAK93628.1"/>
    <property type="molecule type" value="mRNA"/>
</dbReference>
<dbReference type="EMBL" id="AY091443">
    <property type="protein sequence ID" value="AAM14382.1"/>
    <property type="molecule type" value="mRNA"/>
</dbReference>
<dbReference type="PIR" id="T49201">
    <property type="entry name" value="T49201"/>
</dbReference>
<dbReference type="RefSeq" id="NP_001325433.1">
    <property type="nucleotide sequence ID" value="NM_001339759.1"/>
</dbReference>
<dbReference type="RefSeq" id="NP_191148.1">
    <property type="nucleotide sequence ID" value="NM_115447.2"/>
</dbReference>
<dbReference type="SMR" id="Q9LY56"/>
<dbReference type="FunCoup" id="Q9LY56">
    <property type="interactions" value="73"/>
</dbReference>
<dbReference type="STRING" id="3702.Q9LY56"/>
<dbReference type="iPTMnet" id="Q9LY56"/>
<dbReference type="PaxDb" id="3702-AT3G55890.1"/>
<dbReference type="ProteomicsDB" id="242372"/>
<dbReference type="DNASU" id="824755"/>
<dbReference type="EnsemblPlants" id="AT3G55890.1">
    <property type="protein sequence ID" value="AT3G55890.1"/>
    <property type="gene ID" value="AT3G55890"/>
</dbReference>
<dbReference type="EnsemblPlants" id="AT3G55890.4">
    <property type="protein sequence ID" value="AT3G55890.4"/>
    <property type="gene ID" value="AT3G55890"/>
</dbReference>
<dbReference type="GeneID" id="824755"/>
<dbReference type="Gramene" id="AT3G55890.1">
    <property type="protein sequence ID" value="AT3G55890.1"/>
    <property type="gene ID" value="AT3G55890"/>
</dbReference>
<dbReference type="Gramene" id="AT3G55890.4">
    <property type="protein sequence ID" value="AT3G55890.4"/>
    <property type="gene ID" value="AT3G55890"/>
</dbReference>
<dbReference type="KEGG" id="ath:AT3G55890"/>
<dbReference type="Araport" id="AT3G55890"/>
<dbReference type="TAIR" id="AT3G55890"/>
<dbReference type="eggNOG" id="KOG3399">
    <property type="taxonomic scope" value="Eukaryota"/>
</dbReference>
<dbReference type="HOGENOM" id="CLU_043857_1_1_1"/>
<dbReference type="InParanoid" id="Q9LY56"/>
<dbReference type="PhylomeDB" id="Q9LY56"/>
<dbReference type="PRO" id="PR:Q9LY56"/>
<dbReference type="Proteomes" id="UP000006548">
    <property type="component" value="Chromosome 3"/>
</dbReference>
<dbReference type="ExpressionAtlas" id="Q9LY56">
    <property type="expression patterns" value="baseline and differential"/>
</dbReference>
<dbReference type="GO" id="GO:0046872">
    <property type="term" value="F:metal ion binding"/>
    <property type="evidence" value="ECO:0007669"/>
    <property type="project" value="UniProtKB-KW"/>
</dbReference>
<dbReference type="InterPro" id="IPR034751">
    <property type="entry name" value="Yippee"/>
</dbReference>
<dbReference type="InterPro" id="IPR004910">
    <property type="entry name" value="Yippee/Mis18/Cereblon"/>
</dbReference>
<dbReference type="InterPro" id="IPR039058">
    <property type="entry name" value="Yippee_fam"/>
</dbReference>
<dbReference type="PANTHER" id="PTHR13848">
    <property type="entry name" value="PROTEIN YIPPEE-LIKE CG15309-RELATED"/>
    <property type="match status" value="1"/>
</dbReference>
<dbReference type="Pfam" id="PF03226">
    <property type="entry name" value="Yippee-Mis18"/>
    <property type="match status" value="1"/>
</dbReference>
<dbReference type="PROSITE" id="PS51792">
    <property type="entry name" value="YIPPEE"/>
    <property type="match status" value="1"/>
</dbReference>
<keyword id="KW-0479">Metal-binding</keyword>
<keyword id="KW-1185">Reference proteome</keyword>
<keyword id="KW-0862">Zinc</keyword>
<gene>
    <name type="ordered locus">At3g55890</name>
    <name type="ORF">F27K19_70</name>
</gene>
<comment type="similarity">
    <text evidence="2">Belongs to the yippee family.</text>
</comment>
<evidence type="ECO:0000255" key="1">
    <source>
        <dbReference type="PROSITE-ProRule" id="PRU01128"/>
    </source>
</evidence>
<evidence type="ECO:0000305" key="2"/>